<comment type="function">
    <text evidence="1">Catalyzes the reversible conversion of 2-phosphoglycerate (2-PG) into phosphoenolpyruvate (PEP). It is essential for the degradation of carbohydrates via glycolysis.</text>
</comment>
<comment type="catalytic activity">
    <reaction evidence="1">
        <text>(2R)-2-phosphoglycerate = phosphoenolpyruvate + H2O</text>
        <dbReference type="Rhea" id="RHEA:10164"/>
        <dbReference type="ChEBI" id="CHEBI:15377"/>
        <dbReference type="ChEBI" id="CHEBI:58289"/>
        <dbReference type="ChEBI" id="CHEBI:58702"/>
        <dbReference type="EC" id="4.2.1.11"/>
    </reaction>
</comment>
<comment type="cofactor">
    <cofactor evidence="1">
        <name>Mg(2+)</name>
        <dbReference type="ChEBI" id="CHEBI:18420"/>
    </cofactor>
    <text evidence="1">Binds a second Mg(2+) ion via substrate during catalysis.</text>
</comment>
<comment type="pathway">
    <text evidence="1">Carbohydrate degradation; glycolysis; pyruvate from D-glyceraldehyde 3-phosphate: step 4/5.</text>
</comment>
<comment type="subcellular location">
    <subcellularLocation>
        <location evidence="1">Cytoplasm</location>
    </subcellularLocation>
    <subcellularLocation>
        <location evidence="1">Secreted</location>
    </subcellularLocation>
    <subcellularLocation>
        <location evidence="1">Cell surface</location>
    </subcellularLocation>
    <text evidence="1">Fractions of enolase are present in both the cytoplasm and on the cell surface.</text>
</comment>
<comment type="similarity">
    <text evidence="1">Belongs to the enolase family.</text>
</comment>
<evidence type="ECO:0000255" key="1">
    <source>
        <dbReference type="HAMAP-Rule" id="MF_00318"/>
    </source>
</evidence>
<keyword id="KW-0963">Cytoplasm</keyword>
<keyword id="KW-0324">Glycolysis</keyword>
<keyword id="KW-0456">Lyase</keyword>
<keyword id="KW-0460">Magnesium</keyword>
<keyword id="KW-0479">Metal-binding</keyword>
<keyword id="KW-1185">Reference proteome</keyword>
<keyword id="KW-0964">Secreted</keyword>
<sequence>MSAIVDIVGREVLDSRGNPTVECDVLLESGVMGRAAVPSGASTGSREAIELRDGDKARYLGKGVLKAVEHINTEISEAVLGLDASEQAFLDKTLIDLDGTDNKSRLGANAMLAVSMAVARAAAEESGLPLYRYLGGMGGMQLPVPMMNVINGGAHANNSLDLQEFMIIPVGAPSFREAVRWGAEVFHALKKIIHDKGMSTAVGDEGGFAPSVENHEAAIQLILQAIEAAGYTAGEQIALGLDCAASEFYKDGQYVLEGEGGLRLTAQQWTDMLATWCDKYPIISIEDGMAEGDWDGWKTLTERLGQNVQLVGDDLFVTNTKILKEGIDKRIANSILIKINQIGTLTETFAAIEMAKRAGYTAVISHRSGETEDSTIADIAVGTNAGQIKTGSLSRSDRIAKYNQLLRIEEDLGDIAFYPGRAAFYNLR</sequence>
<reference key="1">
    <citation type="submission" date="2009-01" db="EMBL/GenBank/DDBJ databases">
        <title>Complete sequence of Diaphorobacter sp. TPSY.</title>
        <authorList>
            <consortium name="US DOE Joint Genome Institute"/>
            <person name="Lucas S."/>
            <person name="Copeland A."/>
            <person name="Lapidus A."/>
            <person name="Glavina del Rio T."/>
            <person name="Tice H."/>
            <person name="Bruce D."/>
            <person name="Goodwin L."/>
            <person name="Pitluck S."/>
            <person name="Chertkov O."/>
            <person name="Brettin T."/>
            <person name="Detter J.C."/>
            <person name="Han C."/>
            <person name="Larimer F."/>
            <person name="Land M."/>
            <person name="Hauser L."/>
            <person name="Kyrpides N."/>
            <person name="Mikhailova N."/>
            <person name="Coates J.D."/>
        </authorList>
    </citation>
    <scope>NUCLEOTIDE SEQUENCE [LARGE SCALE GENOMIC DNA]</scope>
    <source>
        <strain>TPSY</strain>
    </source>
</reference>
<feature type="chain" id="PRO_1000189947" description="Enolase">
    <location>
        <begin position="1"/>
        <end position="428"/>
    </location>
</feature>
<feature type="active site" description="Proton donor" evidence="1">
    <location>
        <position position="205"/>
    </location>
</feature>
<feature type="active site" description="Proton acceptor" evidence="1">
    <location>
        <position position="338"/>
    </location>
</feature>
<feature type="binding site" evidence="1">
    <location>
        <position position="163"/>
    </location>
    <ligand>
        <name>(2R)-2-phosphoglycerate</name>
        <dbReference type="ChEBI" id="CHEBI:58289"/>
    </ligand>
</feature>
<feature type="binding site" evidence="1">
    <location>
        <position position="242"/>
    </location>
    <ligand>
        <name>Mg(2+)</name>
        <dbReference type="ChEBI" id="CHEBI:18420"/>
    </ligand>
</feature>
<feature type="binding site" evidence="1">
    <location>
        <position position="286"/>
    </location>
    <ligand>
        <name>Mg(2+)</name>
        <dbReference type="ChEBI" id="CHEBI:18420"/>
    </ligand>
</feature>
<feature type="binding site" evidence="1">
    <location>
        <position position="313"/>
    </location>
    <ligand>
        <name>Mg(2+)</name>
        <dbReference type="ChEBI" id="CHEBI:18420"/>
    </ligand>
</feature>
<feature type="binding site" evidence="1">
    <location>
        <position position="338"/>
    </location>
    <ligand>
        <name>(2R)-2-phosphoglycerate</name>
        <dbReference type="ChEBI" id="CHEBI:58289"/>
    </ligand>
</feature>
<feature type="binding site" evidence="1">
    <location>
        <position position="367"/>
    </location>
    <ligand>
        <name>(2R)-2-phosphoglycerate</name>
        <dbReference type="ChEBI" id="CHEBI:58289"/>
    </ligand>
</feature>
<feature type="binding site" evidence="1">
    <location>
        <position position="368"/>
    </location>
    <ligand>
        <name>(2R)-2-phosphoglycerate</name>
        <dbReference type="ChEBI" id="CHEBI:58289"/>
    </ligand>
</feature>
<feature type="binding site" evidence="1">
    <location>
        <position position="389"/>
    </location>
    <ligand>
        <name>(2R)-2-phosphoglycerate</name>
        <dbReference type="ChEBI" id="CHEBI:58289"/>
    </ligand>
</feature>
<accession>B9MEQ4</accession>
<proteinExistence type="inferred from homology"/>
<gene>
    <name evidence="1" type="primary">eno</name>
    <name type="ordered locus">Dtpsy_0912</name>
</gene>
<dbReference type="EC" id="4.2.1.11" evidence="1"/>
<dbReference type="EMBL" id="CP001392">
    <property type="protein sequence ID" value="ACM32390.1"/>
    <property type="molecule type" value="Genomic_DNA"/>
</dbReference>
<dbReference type="RefSeq" id="WP_015912643.1">
    <property type="nucleotide sequence ID" value="NC_011992.1"/>
</dbReference>
<dbReference type="SMR" id="B9MEQ4"/>
<dbReference type="GeneID" id="84682537"/>
<dbReference type="KEGG" id="dia:Dtpsy_0912"/>
<dbReference type="eggNOG" id="COG0148">
    <property type="taxonomic scope" value="Bacteria"/>
</dbReference>
<dbReference type="HOGENOM" id="CLU_031223_2_1_4"/>
<dbReference type="UniPathway" id="UPA00109">
    <property type="reaction ID" value="UER00187"/>
</dbReference>
<dbReference type="Proteomes" id="UP000000450">
    <property type="component" value="Chromosome"/>
</dbReference>
<dbReference type="GO" id="GO:0009986">
    <property type="term" value="C:cell surface"/>
    <property type="evidence" value="ECO:0007669"/>
    <property type="project" value="UniProtKB-SubCell"/>
</dbReference>
<dbReference type="GO" id="GO:0005576">
    <property type="term" value="C:extracellular region"/>
    <property type="evidence" value="ECO:0007669"/>
    <property type="project" value="UniProtKB-SubCell"/>
</dbReference>
<dbReference type="GO" id="GO:0000015">
    <property type="term" value="C:phosphopyruvate hydratase complex"/>
    <property type="evidence" value="ECO:0007669"/>
    <property type="project" value="InterPro"/>
</dbReference>
<dbReference type="GO" id="GO:0000287">
    <property type="term" value="F:magnesium ion binding"/>
    <property type="evidence" value="ECO:0007669"/>
    <property type="project" value="UniProtKB-UniRule"/>
</dbReference>
<dbReference type="GO" id="GO:0004634">
    <property type="term" value="F:phosphopyruvate hydratase activity"/>
    <property type="evidence" value="ECO:0007669"/>
    <property type="project" value="UniProtKB-UniRule"/>
</dbReference>
<dbReference type="GO" id="GO:0006096">
    <property type="term" value="P:glycolytic process"/>
    <property type="evidence" value="ECO:0007669"/>
    <property type="project" value="UniProtKB-UniRule"/>
</dbReference>
<dbReference type="CDD" id="cd03313">
    <property type="entry name" value="enolase"/>
    <property type="match status" value="1"/>
</dbReference>
<dbReference type="FunFam" id="3.20.20.120:FF:000001">
    <property type="entry name" value="Enolase"/>
    <property type="match status" value="1"/>
</dbReference>
<dbReference type="FunFam" id="3.30.390.10:FF:000001">
    <property type="entry name" value="Enolase"/>
    <property type="match status" value="1"/>
</dbReference>
<dbReference type="Gene3D" id="3.20.20.120">
    <property type="entry name" value="Enolase-like C-terminal domain"/>
    <property type="match status" value="1"/>
</dbReference>
<dbReference type="Gene3D" id="3.30.390.10">
    <property type="entry name" value="Enolase-like, N-terminal domain"/>
    <property type="match status" value="1"/>
</dbReference>
<dbReference type="HAMAP" id="MF_00318">
    <property type="entry name" value="Enolase"/>
    <property type="match status" value="1"/>
</dbReference>
<dbReference type="InterPro" id="IPR000941">
    <property type="entry name" value="Enolase"/>
</dbReference>
<dbReference type="InterPro" id="IPR036849">
    <property type="entry name" value="Enolase-like_C_sf"/>
</dbReference>
<dbReference type="InterPro" id="IPR029017">
    <property type="entry name" value="Enolase-like_N"/>
</dbReference>
<dbReference type="InterPro" id="IPR020810">
    <property type="entry name" value="Enolase_C"/>
</dbReference>
<dbReference type="InterPro" id="IPR020809">
    <property type="entry name" value="Enolase_CS"/>
</dbReference>
<dbReference type="InterPro" id="IPR020811">
    <property type="entry name" value="Enolase_N"/>
</dbReference>
<dbReference type="NCBIfam" id="TIGR01060">
    <property type="entry name" value="eno"/>
    <property type="match status" value="1"/>
</dbReference>
<dbReference type="PANTHER" id="PTHR11902">
    <property type="entry name" value="ENOLASE"/>
    <property type="match status" value="1"/>
</dbReference>
<dbReference type="PANTHER" id="PTHR11902:SF1">
    <property type="entry name" value="ENOLASE"/>
    <property type="match status" value="1"/>
</dbReference>
<dbReference type="Pfam" id="PF00113">
    <property type="entry name" value="Enolase_C"/>
    <property type="match status" value="1"/>
</dbReference>
<dbReference type="Pfam" id="PF03952">
    <property type="entry name" value="Enolase_N"/>
    <property type="match status" value="1"/>
</dbReference>
<dbReference type="PIRSF" id="PIRSF001400">
    <property type="entry name" value="Enolase"/>
    <property type="match status" value="1"/>
</dbReference>
<dbReference type="PRINTS" id="PR00148">
    <property type="entry name" value="ENOLASE"/>
</dbReference>
<dbReference type="SFLD" id="SFLDS00001">
    <property type="entry name" value="Enolase"/>
    <property type="match status" value="1"/>
</dbReference>
<dbReference type="SFLD" id="SFLDF00002">
    <property type="entry name" value="enolase"/>
    <property type="match status" value="1"/>
</dbReference>
<dbReference type="SMART" id="SM01192">
    <property type="entry name" value="Enolase_C"/>
    <property type="match status" value="1"/>
</dbReference>
<dbReference type="SMART" id="SM01193">
    <property type="entry name" value="Enolase_N"/>
    <property type="match status" value="1"/>
</dbReference>
<dbReference type="SUPFAM" id="SSF51604">
    <property type="entry name" value="Enolase C-terminal domain-like"/>
    <property type="match status" value="1"/>
</dbReference>
<dbReference type="SUPFAM" id="SSF54826">
    <property type="entry name" value="Enolase N-terminal domain-like"/>
    <property type="match status" value="1"/>
</dbReference>
<dbReference type="PROSITE" id="PS00164">
    <property type="entry name" value="ENOLASE"/>
    <property type="match status" value="1"/>
</dbReference>
<protein>
    <recommendedName>
        <fullName evidence="1">Enolase</fullName>
        <ecNumber evidence="1">4.2.1.11</ecNumber>
    </recommendedName>
    <alternativeName>
        <fullName evidence="1">2-phospho-D-glycerate hydro-lyase</fullName>
    </alternativeName>
    <alternativeName>
        <fullName evidence="1">2-phosphoglycerate dehydratase</fullName>
    </alternativeName>
</protein>
<name>ENO_ACIET</name>
<organism>
    <name type="scientific">Acidovorax ebreus (strain TPSY)</name>
    <name type="common">Diaphorobacter sp. (strain TPSY)</name>
    <dbReference type="NCBI Taxonomy" id="535289"/>
    <lineage>
        <taxon>Bacteria</taxon>
        <taxon>Pseudomonadati</taxon>
        <taxon>Pseudomonadota</taxon>
        <taxon>Betaproteobacteria</taxon>
        <taxon>Burkholderiales</taxon>
        <taxon>Comamonadaceae</taxon>
        <taxon>Diaphorobacter</taxon>
    </lineage>
</organism>